<gene>
    <name evidence="1" type="primary">tatB</name>
    <name type="ordered locus">SGR_2375</name>
</gene>
<comment type="function">
    <text evidence="1">Part of the twin-arginine translocation (Tat) system that transports large folded proteins containing a characteristic twin-arginine motif in their signal peptide across membranes. Together with TatC, TatB is part of a receptor directly interacting with Tat signal peptides. TatB may form an oligomeric binding site that transiently accommodates folded Tat precursor proteins before their translocation.</text>
</comment>
<comment type="subunit">
    <text evidence="1">The Tat system comprises two distinct complexes: a TatABC complex, containing multiple copies of TatA, TatB and TatC subunits, and a separate TatA complex, containing only TatA subunits. Substrates initially bind to the TatABC complex, which probably triggers association of the separate TatA complex to form the active translocon.</text>
</comment>
<comment type="subcellular location">
    <subcellularLocation>
        <location evidence="1">Cell membrane</location>
        <topology evidence="1">Single-pass membrane protein</topology>
    </subcellularLocation>
</comment>
<comment type="similarity">
    <text evidence="1">Belongs to the TatB family.</text>
</comment>
<evidence type="ECO:0000255" key="1">
    <source>
        <dbReference type="HAMAP-Rule" id="MF_00237"/>
    </source>
</evidence>
<evidence type="ECO:0000256" key="2">
    <source>
        <dbReference type="SAM" id="MobiDB-lite"/>
    </source>
</evidence>
<protein>
    <recommendedName>
        <fullName evidence="1">Sec-independent protein translocase protein TatB</fullName>
    </recommendedName>
</protein>
<name>TATB_STRGG</name>
<accession>B1W1H9</accession>
<organism>
    <name type="scientific">Streptomyces griseus subsp. griseus (strain JCM 4626 / CBS 651.72 / NBRC 13350 / KCC S-0626 / ISP 5235)</name>
    <dbReference type="NCBI Taxonomy" id="455632"/>
    <lineage>
        <taxon>Bacteria</taxon>
        <taxon>Bacillati</taxon>
        <taxon>Actinomycetota</taxon>
        <taxon>Actinomycetes</taxon>
        <taxon>Kitasatosporales</taxon>
        <taxon>Streptomycetaceae</taxon>
        <taxon>Streptomyces</taxon>
    </lineage>
</organism>
<sequence length="166" mass="18037">MFNDIGALELLTLGVLAVLVFGPDKLPKLIQDVTRTIRKIREFSDSAKEDIRSELGPQFKDFEFEDLNPKTFVRKQLMDGNDDLGLKEIRESFDLRKEISDVTDAVNGRTPAASDTANSAVNGSAGAAADGVTTSLTKTGETTPDLLKKAPQQAQPERPPFDADAT</sequence>
<dbReference type="EMBL" id="AP009493">
    <property type="protein sequence ID" value="BAG19204.1"/>
    <property type="molecule type" value="Genomic_DNA"/>
</dbReference>
<dbReference type="RefSeq" id="WP_012379150.1">
    <property type="nucleotide sequence ID" value="NC_010572.1"/>
</dbReference>
<dbReference type="SMR" id="B1W1H9"/>
<dbReference type="KEGG" id="sgr:SGR_2375"/>
<dbReference type="PATRIC" id="fig|455632.4.peg.2418"/>
<dbReference type="eggNOG" id="COG1826">
    <property type="taxonomic scope" value="Bacteria"/>
</dbReference>
<dbReference type="HOGENOM" id="CLU_086034_2_1_11"/>
<dbReference type="Proteomes" id="UP000001685">
    <property type="component" value="Chromosome"/>
</dbReference>
<dbReference type="GO" id="GO:0033281">
    <property type="term" value="C:TAT protein transport complex"/>
    <property type="evidence" value="ECO:0007669"/>
    <property type="project" value="UniProtKB-UniRule"/>
</dbReference>
<dbReference type="GO" id="GO:0008320">
    <property type="term" value="F:protein transmembrane transporter activity"/>
    <property type="evidence" value="ECO:0007669"/>
    <property type="project" value="UniProtKB-UniRule"/>
</dbReference>
<dbReference type="GO" id="GO:0043953">
    <property type="term" value="P:protein transport by the Tat complex"/>
    <property type="evidence" value="ECO:0007669"/>
    <property type="project" value="UniProtKB-UniRule"/>
</dbReference>
<dbReference type="Gene3D" id="1.20.5.3310">
    <property type="match status" value="1"/>
</dbReference>
<dbReference type="HAMAP" id="MF_00237">
    <property type="entry name" value="TatB"/>
    <property type="match status" value="1"/>
</dbReference>
<dbReference type="InterPro" id="IPR003369">
    <property type="entry name" value="TatA/B/E"/>
</dbReference>
<dbReference type="InterPro" id="IPR018448">
    <property type="entry name" value="TatB"/>
</dbReference>
<dbReference type="NCBIfam" id="NF002374">
    <property type="entry name" value="PRK01371.1-1"/>
    <property type="match status" value="1"/>
</dbReference>
<dbReference type="NCBIfam" id="NF002377">
    <property type="entry name" value="PRK01371.1-4"/>
    <property type="match status" value="1"/>
</dbReference>
<dbReference type="PANTHER" id="PTHR33162">
    <property type="entry name" value="SEC-INDEPENDENT PROTEIN TRANSLOCASE PROTEIN TATA, CHLOROPLASTIC"/>
    <property type="match status" value="1"/>
</dbReference>
<dbReference type="PANTHER" id="PTHR33162:SF1">
    <property type="entry name" value="SEC-INDEPENDENT PROTEIN TRANSLOCASE PROTEIN TATA, CHLOROPLASTIC"/>
    <property type="match status" value="1"/>
</dbReference>
<dbReference type="Pfam" id="PF02416">
    <property type="entry name" value="TatA_B_E"/>
    <property type="match status" value="1"/>
</dbReference>
<dbReference type="PRINTS" id="PR01506">
    <property type="entry name" value="TATBPROTEIN"/>
</dbReference>
<keyword id="KW-1003">Cell membrane</keyword>
<keyword id="KW-0472">Membrane</keyword>
<keyword id="KW-0653">Protein transport</keyword>
<keyword id="KW-0811">Translocation</keyword>
<keyword id="KW-0812">Transmembrane</keyword>
<keyword id="KW-1133">Transmembrane helix</keyword>
<keyword id="KW-0813">Transport</keyword>
<proteinExistence type="inferred from homology"/>
<reference key="1">
    <citation type="journal article" date="2008" name="J. Bacteriol.">
        <title>Genome sequence of the streptomycin-producing microorganism Streptomyces griseus IFO 13350.</title>
        <authorList>
            <person name="Ohnishi Y."/>
            <person name="Ishikawa J."/>
            <person name="Hara H."/>
            <person name="Suzuki H."/>
            <person name="Ikenoya M."/>
            <person name="Ikeda H."/>
            <person name="Yamashita A."/>
            <person name="Hattori M."/>
            <person name="Horinouchi S."/>
        </authorList>
    </citation>
    <scope>NUCLEOTIDE SEQUENCE [LARGE SCALE GENOMIC DNA]</scope>
    <source>
        <strain>JCM 4626 / CBS 651.72 / NBRC 13350 / KCC S-0626 / ISP 5235</strain>
    </source>
</reference>
<feature type="chain" id="PRO_1000100638" description="Sec-independent protein translocase protein TatB">
    <location>
        <begin position="1"/>
        <end position="166"/>
    </location>
</feature>
<feature type="transmembrane region" description="Helical" evidence="1">
    <location>
        <begin position="2"/>
        <end position="22"/>
    </location>
</feature>
<feature type="region of interest" description="Disordered" evidence="2">
    <location>
        <begin position="110"/>
        <end position="166"/>
    </location>
</feature>
<feature type="compositionally biased region" description="Low complexity" evidence="2">
    <location>
        <begin position="117"/>
        <end position="129"/>
    </location>
</feature>
<feature type="compositionally biased region" description="Polar residues" evidence="2">
    <location>
        <begin position="132"/>
        <end position="142"/>
    </location>
</feature>